<evidence type="ECO:0000255" key="1">
    <source>
        <dbReference type="HAMAP-Rule" id="MF_00598"/>
    </source>
</evidence>
<dbReference type="EMBL" id="AM920689">
    <property type="protein sequence ID" value="CAP53300.1"/>
    <property type="molecule type" value="Genomic_DNA"/>
</dbReference>
<dbReference type="SMR" id="B0RWR1"/>
<dbReference type="KEGG" id="xca:xcc-b100_3933"/>
<dbReference type="HOGENOM" id="CLU_133242_0_0_6"/>
<dbReference type="Proteomes" id="UP000001188">
    <property type="component" value="Chromosome"/>
</dbReference>
<dbReference type="HAMAP" id="MF_00598">
    <property type="entry name" value="Smg"/>
    <property type="match status" value="1"/>
</dbReference>
<dbReference type="InterPro" id="IPR007456">
    <property type="entry name" value="Smg"/>
</dbReference>
<dbReference type="NCBIfam" id="NF002897">
    <property type="entry name" value="PRK03430.1"/>
    <property type="match status" value="1"/>
</dbReference>
<dbReference type="PANTHER" id="PTHR38692">
    <property type="entry name" value="PROTEIN SMG"/>
    <property type="match status" value="1"/>
</dbReference>
<dbReference type="PANTHER" id="PTHR38692:SF1">
    <property type="entry name" value="PROTEIN SMG"/>
    <property type="match status" value="1"/>
</dbReference>
<dbReference type="Pfam" id="PF04361">
    <property type="entry name" value="DUF494"/>
    <property type="match status" value="1"/>
</dbReference>
<name>SMG_XANCB</name>
<reference key="1">
    <citation type="journal article" date="2008" name="J. Biotechnol.">
        <title>The genome of Xanthomonas campestris pv. campestris B100 and its use for the reconstruction of metabolic pathways involved in xanthan biosynthesis.</title>
        <authorList>
            <person name="Vorhoelter F.-J."/>
            <person name="Schneiker S."/>
            <person name="Goesmann A."/>
            <person name="Krause L."/>
            <person name="Bekel T."/>
            <person name="Kaiser O."/>
            <person name="Linke B."/>
            <person name="Patschkowski T."/>
            <person name="Rueckert C."/>
            <person name="Schmid J."/>
            <person name="Sidhu V.K."/>
            <person name="Sieber V."/>
            <person name="Tauch A."/>
            <person name="Watt S.A."/>
            <person name="Weisshaar B."/>
            <person name="Becker A."/>
            <person name="Niehaus K."/>
            <person name="Puehler A."/>
        </authorList>
    </citation>
    <scope>NUCLEOTIDE SEQUENCE [LARGE SCALE GENOMIC DNA]</scope>
    <source>
        <strain>B100</strain>
    </source>
</reference>
<sequence>MKESILDVLLYLFEHYFSEDADLVRDRDSLQNGLIQAGFSPAEISKAFDWLDALAEQRPSVARPHVDGPVRIYHGPELDKLDVDCRGFLLFLEQHRILDADQRELVLDRAMALDQDELDLDDLKWVVLMVLFNQPGAEAAYAWMETQMFLDEPEPVH</sequence>
<protein>
    <recommendedName>
        <fullName evidence="1">Protein Smg homolog</fullName>
    </recommendedName>
</protein>
<feature type="chain" id="PRO_1000129911" description="Protein Smg homolog">
    <location>
        <begin position="1"/>
        <end position="157"/>
    </location>
</feature>
<comment type="similarity">
    <text evidence="1">Belongs to the Smg family.</text>
</comment>
<organism>
    <name type="scientific">Xanthomonas campestris pv. campestris (strain B100)</name>
    <dbReference type="NCBI Taxonomy" id="509169"/>
    <lineage>
        <taxon>Bacteria</taxon>
        <taxon>Pseudomonadati</taxon>
        <taxon>Pseudomonadota</taxon>
        <taxon>Gammaproteobacteria</taxon>
        <taxon>Lysobacterales</taxon>
        <taxon>Lysobacteraceae</taxon>
        <taxon>Xanthomonas</taxon>
    </lineage>
</organism>
<proteinExistence type="inferred from homology"/>
<gene>
    <name evidence="1" type="primary">smg</name>
    <name type="ordered locus">xcc-b100_3933</name>
</gene>
<accession>B0RWR1</accession>